<organism>
    <name type="scientific">Geobacillus kaustophilus (strain HTA426)</name>
    <dbReference type="NCBI Taxonomy" id="235909"/>
    <lineage>
        <taxon>Bacteria</taxon>
        <taxon>Bacillati</taxon>
        <taxon>Bacillota</taxon>
        <taxon>Bacilli</taxon>
        <taxon>Bacillales</taxon>
        <taxon>Anoxybacillaceae</taxon>
        <taxon>Geobacillus</taxon>
        <taxon>Geobacillus thermoleovorans group</taxon>
    </lineage>
</organism>
<keyword id="KW-0169">Cobalamin biosynthesis</keyword>
<keyword id="KW-0315">Glutamine amidotransferase</keyword>
<keyword id="KW-1185">Reference proteome</keyword>
<protein>
    <recommendedName>
        <fullName evidence="1">Cobyric acid synthase</fullName>
    </recommendedName>
</protein>
<feature type="chain" id="PRO_0000141303" description="Cobyric acid synthase">
    <location>
        <begin position="1"/>
        <end position="503"/>
    </location>
</feature>
<feature type="domain" description="GATase cobBQ-type" evidence="1">
    <location>
        <begin position="255"/>
        <end position="444"/>
    </location>
</feature>
<feature type="active site" description="Nucleophile" evidence="1">
    <location>
        <position position="337"/>
    </location>
</feature>
<feature type="active site" evidence="1">
    <location>
        <position position="436"/>
    </location>
</feature>
<evidence type="ECO:0000255" key="1">
    <source>
        <dbReference type="HAMAP-Rule" id="MF_00028"/>
    </source>
</evidence>
<accession>Q5KZ06</accession>
<reference key="1">
    <citation type="journal article" date="2004" name="Nucleic Acids Res.">
        <title>Thermoadaptation trait revealed by the genome sequence of thermophilic Geobacillus kaustophilus.</title>
        <authorList>
            <person name="Takami H."/>
            <person name="Takaki Y."/>
            <person name="Chee G.-J."/>
            <person name="Nishi S."/>
            <person name="Shimamura S."/>
            <person name="Suzuki H."/>
            <person name="Matsui S."/>
            <person name="Uchiyama I."/>
        </authorList>
    </citation>
    <scope>NUCLEOTIDE SEQUENCE [LARGE SCALE GENOMIC DNA]</scope>
    <source>
        <strain>HTA426</strain>
    </source>
</reference>
<proteinExistence type="inferred from homology"/>
<comment type="function">
    <text evidence="1">Catalyzes amidations at positions B, D, E, and G on adenosylcobyrinic A,C-diamide. NH(2) groups are provided by glutamine, and one molecule of ATP is hydrogenolyzed for each amidation.</text>
</comment>
<comment type="pathway">
    <text evidence="1">Cofactor biosynthesis; adenosylcobalamin biosynthesis.</text>
</comment>
<comment type="similarity">
    <text evidence="1">Belongs to the CobB/CobQ family. CobQ subfamily.</text>
</comment>
<name>COBQ_GEOKA</name>
<dbReference type="EMBL" id="BA000043">
    <property type="protein sequence ID" value="BAD76080.1"/>
    <property type="molecule type" value="Genomic_DNA"/>
</dbReference>
<dbReference type="RefSeq" id="WP_011231286.1">
    <property type="nucleotide sequence ID" value="NC_006510.1"/>
</dbReference>
<dbReference type="STRING" id="235909.GK1795"/>
<dbReference type="KEGG" id="gka:GK1795"/>
<dbReference type="PATRIC" id="fig|235909.7.peg.1922"/>
<dbReference type="eggNOG" id="COG1492">
    <property type="taxonomic scope" value="Bacteria"/>
</dbReference>
<dbReference type="HOGENOM" id="CLU_019250_2_2_9"/>
<dbReference type="UniPathway" id="UPA00148"/>
<dbReference type="Proteomes" id="UP000001172">
    <property type="component" value="Chromosome"/>
</dbReference>
<dbReference type="GO" id="GO:0015420">
    <property type="term" value="F:ABC-type vitamin B12 transporter activity"/>
    <property type="evidence" value="ECO:0007669"/>
    <property type="project" value="UniProtKB-UniRule"/>
</dbReference>
<dbReference type="GO" id="GO:0003824">
    <property type="term" value="F:catalytic activity"/>
    <property type="evidence" value="ECO:0007669"/>
    <property type="project" value="InterPro"/>
</dbReference>
<dbReference type="GO" id="GO:0009236">
    <property type="term" value="P:cobalamin biosynthetic process"/>
    <property type="evidence" value="ECO:0007669"/>
    <property type="project" value="UniProtKB-UniRule"/>
</dbReference>
<dbReference type="CDD" id="cd05389">
    <property type="entry name" value="CobQ_N"/>
    <property type="match status" value="1"/>
</dbReference>
<dbReference type="CDD" id="cd01750">
    <property type="entry name" value="GATase1_CobQ"/>
    <property type="match status" value="1"/>
</dbReference>
<dbReference type="Gene3D" id="3.40.50.880">
    <property type="match status" value="1"/>
</dbReference>
<dbReference type="Gene3D" id="3.40.50.300">
    <property type="entry name" value="P-loop containing nucleotide triphosphate hydrolases"/>
    <property type="match status" value="1"/>
</dbReference>
<dbReference type="HAMAP" id="MF_00028">
    <property type="entry name" value="CobQ"/>
    <property type="match status" value="1"/>
</dbReference>
<dbReference type="InterPro" id="IPR029062">
    <property type="entry name" value="Class_I_gatase-like"/>
</dbReference>
<dbReference type="InterPro" id="IPR002586">
    <property type="entry name" value="CobQ/CobB/MinD/ParA_Nub-bd_dom"/>
</dbReference>
<dbReference type="InterPro" id="IPR033949">
    <property type="entry name" value="CobQ_GATase1"/>
</dbReference>
<dbReference type="InterPro" id="IPR047045">
    <property type="entry name" value="CobQ_N"/>
</dbReference>
<dbReference type="InterPro" id="IPR004459">
    <property type="entry name" value="CobQ_synth"/>
</dbReference>
<dbReference type="InterPro" id="IPR011698">
    <property type="entry name" value="GATase_3"/>
</dbReference>
<dbReference type="InterPro" id="IPR027417">
    <property type="entry name" value="P-loop_NTPase"/>
</dbReference>
<dbReference type="NCBIfam" id="TIGR00313">
    <property type="entry name" value="cobQ"/>
    <property type="match status" value="1"/>
</dbReference>
<dbReference type="NCBIfam" id="NF001989">
    <property type="entry name" value="PRK00784.1"/>
    <property type="match status" value="1"/>
</dbReference>
<dbReference type="PANTHER" id="PTHR21343:SF1">
    <property type="entry name" value="COBYRIC ACID SYNTHASE"/>
    <property type="match status" value="1"/>
</dbReference>
<dbReference type="PANTHER" id="PTHR21343">
    <property type="entry name" value="DETHIOBIOTIN SYNTHETASE"/>
    <property type="match status" value="1"/>
</dbReference>
<dbReference type="Pfam" id="PF01656">
    <property type="entry name" value="CbiA"/>
    <property type="match status" value="1"/>
</dbReference>
<dbReference type="Pfam" id="PF07685">
    <property type="entry name" value="GATase_3"/>
    <property type="match status" value="1"/>
</dbReference>
<dbReference type="SUPFAM" id="SSF52317">
    <property type="entry name" value="Class I glutamine amidotransferase-like"/>
    <property type="match status" value="1"/>
</dbReference>
<dbReference type="SUPFAM" id="SSF52540">
    <property type="entry name" value="P-loop containing nucleoside triphosphate hydrolases"/>
    <property type="match status" value="1"/>
</dbReference>
<dbReference type="PROSITE" id="PS51274">
    <property type="entry name" value="GATASE_COBBQ"/>
    <property type="match status" value="1"/>
</dbReference>
<gene>
    <name evidence="1" type="primary">cobQ</name>
    <name type="ordered locus">GK1795</name>
</gene>
<sequence length="503" mass="55344">MAKALPIMFQGTHSDAGKSVIATAFCRMFAQDGWKTAPFKSQNMSLNSYVTPDGNEIGRAQGIQAEAAGVAARAEMNPILIKPSREHESQIVVLGKPYGNMQAFAYRNEFFHQGLAVIRQSLETLMNEYDRIVIEGAGSPAEVNLNDRELVNMRIARLANAPVVLIGDIERGGVFASLVGTLSLLEPEDRKRVIGVIINKFRGDVALLKPGLDWFEQHTGVPVLGVVPYLPDLAIDAEDSLSLERFASSVGGEEAIDVAVIRCPKIANFTDIDPLLAEPDCRVRLVTHGDELGAPDVIVLPGSKNTIEDLIYMKKRGLASRIVSLVNEGKARVVGLCGGYQMLGAVIRDPYGVETPLPEVKGLGLLPIETTLERTKITIRTEGMLTWAGERFSVQGYEIHMGRSAPLPGYAPLIEADGRHEGAKHSDERVLGTYMHDLFHNDAFRTAFFNNIRRQKGIAPSGVRLFRSLKEKAFDRLAAHVRQHVAVERIEQMMRQFGCRDHS</sequence>